<feature type="chain" id="PRO_0000448605" description="Prs ADP-ribosylating toxin">
    <location>
        <begin position="1"/>
        <end position="161"/>
    </location>
</feature>
<feature type="mutagenesis site" description="No change in toxicity." evidence="1">
    <original>S</original>
    <variation>A</variation>
    <location>
        <position position="21"/>
    </location>
</feature>
<feature type="mutagenesis site" description="No longer toxic, greatly decreased auto-ADP-ribosylation." evidence="1">
    <original>R</original>
    <variation>A</variation>
    <location>
        <position position="31"/>
    </location>
</feature>
<feature type="mutagenesis site" description="No change in toxicity." evidence="1">
    <original>Y</original>
    <variation>A</variation>
    <location>
        <position position="41"/>
    </location>
</feature>
<feature type="mutagenesis site" description="No change in toxicity." evidence="1">
    <original>S</original>
    <variation>A</variation>
    <location>
        <position position="44"/>
    </location>
</feature>
<feature type="mutagenesis site" description="No change in toxicity." evidence="1">
    <original>S</original>
    <variation>A</variation>
    <location>
        <position position="45"/>
    </location>
</feature>
<feature type="mutagenesis site" description="No longer toxic." evidence="1">
    <original>E</original>
    <variation>A</variation>
    <location>
        <position position="52"/>
    </location>
</feature>
<feature type="mutagenesis site" description="No longer toxic." evidence="1">
    <original>H</original>
    <variation>A</variation>
    <location>
        <position position="56"/>
    </location>
</feature>
<feature type="mutagenesis site" description="No change in toxicity." evidence="1">
    <original>S</original>
    <variation>A</variation>
    <location>
        <position position="122"/>
    </location>
</feature>
<feature type="mutagenesis site" description="No longer toxic." evidence="1">
    <original>EE</original>
    <variation>AA</variation>
    <location>
        <begin position="127"/>
        <end position="128"/>
    </location>
</feature>
<feature type="mutagenesis site" description="No change in toxicity." evidence="1">
    <original>E</original>
    <variation>A</variation>
    <location>
        <position position="127"/>
    </location>
</feature>
<feature type="mutagenesis site" description="No change in toxicity." evidence="1">
    <original>E</original>
    <variation>A</variation>
    <location>
        <position position="128"/>
    </location>
</feature>
<feature type="strand" evidence="6">
    <location>
        <begin position="2"/>
        <end position="10"/>
    </location>
</feature>
<feature type="strand" evidence="6">
    <location>
        <begin position="13"/>
        <end position="15"/>
    </location>
</feature>
<feature type="helix" evidence="6">
    <location>
        <begin position="23"/>
        <end position="28"/>
    </location>
</feature>
<feature type="strand" evidence="6">
    <location>
        <begin position="40"/>
        <end position="45"/>
    </location>
</feature>
<feature type="helix" evidence="6">
    <location>
        <begin position="46"/>
        <end position="53"/>
    </location>
</feature>
<feature type="turn" evidence="6">
    <location>
        <begin position="54"/>
        <end position="58"/>
    </location>
</feature>
<feature type="strand" evidence="6">
    <location>
        <begin position="66"/>
        <end position="74"/>
    </location>
</feature>
<feature type="helix" evidence="6">
    <location>
        <begin position="75"/>
        <end position="78"/>
    </location>
</feature>
<feature type="turn" evidence="6">
    <location>
        <begin position="86"/>
        <end position="88"/>
    </location>
</feature>
<feature type="turn" evidence="6">
    <location>
        <begin position="91"/>
        <end position="94"/>
    </location>
</feature>
<feature type="helix" evidence="6">
    <location>
        <begin position="100"/>
        <end position="112"/>
    </location>
</feature>
<feature type="strand" evidence="6">
    <location>
        <begin position="116"/>
        <end position="121"/>
    </location>
</feature>
<feature type="strand" evidence="6">
    <location>
        <begin position="123"/>
        <end position="125"/>
    </location>
</feature>
<feature type="strand" evidence="6">
    <location>
        <begin position="128"/>
        <end position="133"/>
    </location>
</feature>
<feature type="helix" evidence="6">
    <location>
        <begin position="138"/>
        <end position="140"/>
    </location>
</feature>
<feature type="strand" evidence="6">
    <location>
        <begin position="144"/>
        <end position="150"/>
    </location>
</feature>
<comment type="function">
    <text evidence="1">Toxic component of a type II toxin-antitoxin (TA) system. Expression in E.coli inhibits cell growth; bacteriostasis is neutralized by expression of cognate antitoxin ParS. ADP-ribosylates E.coli ribose-phosphate pyrophosphokinase (RPPK, prs) using NAD(+) in vitro; ADP-ribosylates RPPK on 'Lys-182' and 'Ser-202'. Cannot use NADP(+). Also auto-ADP-ribosylates in vitro; in the presence of RPPK auto-ADP-ribosylation decreases.</text>
</comment>
<comment type="subunit">
    <text evidence="1">Homodimer, forms heterotetrameric ParS(2)-ParT(2) complexes.</text>
</comment>
<comment type="domain">
    <text evidence="1">Forms salt bridges between the 2 toxin molecules mediated by Glu-127 Glu-128 on one subunit and Arg-46 Arg-149 on the other.</text>
</comment>
<comment type="PTM">
    <text evidence="1">Consumes NAD(+) and auto-ADP-ribosylates on the tryptic fragment Ala-47-Arg-66 in vitro. Also auto-ADP-ribosylates using NADP(+).</text>
</comment>
<comment type="similarity">
    <text evidence="3">Belongs to the MbcT/ParT/Res family.</text>
</comment>
<dbReference type="EC" id="2.4.2.-" evidence="1"/>
<dbReference type="EMBL" id="CP010954">
    <property type="protein sequence ID" value="AJR25280.1"/>
    <property type="molecule type" value="Genomic_DNA"/>
</dbReference>
<dbReference type="RefSeq" id="WP_044662136.1">
    <property type="nucleotide sequence ID" value="NZ_CP010954.1"/>
</dbReference>
<dbReference type="PDB" id="6D0H">
    <property type="method" value="X-ray"/>
    <property type="resolution" value="1.50 A"/>
    <property type="chains" value="A/C=2-159"/>
</dbReference>
<dbReference type="PDB" id="6D0I">
    <property type="method" value="X-ray"/>
    <property type="resolution" value="1.55 A"/>
    <property type="chains" value="A/C=2-159"/>
</dbReference>
<dbReference type="PDBsum" id="6D0H"/>
<dbReference type="PDBsum" id="6D0I"/>
<dbReference type="SMR" id="A0A0C5XL88"/>
<dbReference type="STRING" id="484429.TZ53_17660"/>
<dbReference type="KEGG" id="syb:TZ53_17660"/>
<dbReference type="PATRIC" id="fig|484429.4.peg.3699"/>
<dbReference type="HOGENOM" id="CLU_133611_0_0_5"/>
<dbReference type="Proteomes" id="UP000032302">
    <property type="component" value="Chromosome"/>
</dbReference>
<dbReference type="GO" id="GO:0016757">
    <property type="term" value="F:glycosyltransferase activity"/>
    <property type="evidence" value="ECO:0007669"/>
    <property type="project" value="UniProtKB-KW"/>
</dbReference>
<dbReference type="GO" id="GO:0016779">
    <property type="term" value="F:nucleotidyltransferase activity"/>
    <property type="evidence" value="ECO:0007669"/>
    <property type="project" value="UniProtKB-KW"/>
</dbReference>
<dbReference type="InterPro" id="IPR014914">
    <property type="entry name" value="RES_dom"/>
</dbReference>
<dbReference type="Pfam" id="PF08808">
    <property type="entry name" value="RES"/>
    <property type="match status" value="1"/>
</dbReference>
<dbReference type="SMART" id="SM00953">
    <property type="entry name" value="RES"/>
    <property type="match status" value="1"/>
</dbReference>
<sequence length="161" mass="17408">MTTSFWRIATDARTYEADDLSGAGAKITGGRWNEVGVAIVYAASSRALACLETVVHLNSGGLPLNRYLVEIEVPDEVLASAEVATPGNLPVGWDAEPAGRVSISFGSQWAQSQRTALLLVPSVIVPEETNLLINPAHPDAKGIKARKVRKWLYDPRMIRKA</sequence>
<keyword id="KW-0002">3D-structure</keyword>
<keyword id="KW-0013">ADP-ribosylation</keyword>
<keyword id="KW-0328">Glycosyltransferase</keyword>
<keyword id="KW-0520">NAD</keyword>
<keyword id="KW-0548">Nucleotidyltransferase</keyword>
<keyword id="KW-1277">Toxin-antitoxin system</keyword>
<keyword id="KW-0808">Transferase</keyword>
<gene>
    <name evidence="2" type="primary">parT</name>
    <name evidence="2" type="synonym">yblI</name>
    <name type="ORF">TZ53_17660</name>
</gene>
<accession>A0A0C5XL88</accession>
<proteinExistence type="evidence at protein level"/>
<evidence type="ECO:0000269" key="1">
    <source>
    </source>
</evidence>
<evidence type="ECO:0000303" key="2">
    <source>
    </source>
</evidence>
<evidence type="ECO:0000305" key="3"/>
<evidence type="ECO:0007744" key="4">
    <source>
        <dbReference type="PDB" id="6D0H"/>
    </source>
</evidence>
<evidence type="ECO:0007744" key="5">
    <source>
        <dbReference type="PDB" id="6D0I"/>
    </source>
</evidence>
<evidence type="ECO:0007829" key="6">
    <source>
        <dbReference type="PDB" id="6D0H"/>
    </source>
</evidence>
<reference key="1">
    <citation type="submission" date="2015-02" db="EMBL/GenBank/DDBJ databases">
        <title>The analysis of one genome.</title>
        <authorList>
            <person name="Yan X."/>
        </authorList>
    </citation>
    <scope>NUCLEOTIDE SEQUENCE [LARGE SCALE GENOMIC DNA]</scope>
    <source>
        <strain>YBL2</strain>
    </source>
</reference>
<reference evidence="4 5" key="2">
    <citation type="journal article" date="2019" name="Proc. Natl. Acad. Sci. U.S.A.">
        <title>ParST is a widespread toxin-antitoxin module that targets nucleotide metabolism.</title>
        <authorList>
            <person name="Piscotta F.J."/>
            <person name="Jeffrey P.D."/>
            <person name="Link A.J."/>
        </authorList>
    </citation>
    <scope>X-RAY CRYSTALLOGRAPHY (1.50 ANGSTROMS) OF 2-159 IN COMPLEX WITH ANTITOXIN FRAGMENT</scope>
    <scope>FUNCTION AS A TOXIN</scope>
    <scope>CATALYTIC ACTIVITY</scope>
    <scope>EXPRESSION IN E.COLI</scope>
    <scope>DOMAIN</scope>
    <scope>AUTO-ADP-RIBOSYLATION</scope>
    <scope>MUTAGENESIS OF SER-21; ARG-31; TYR-41; SER-44; SER-45; GLU-52; HIS-56; SER-122; 127-GLU-GLU-128; GLU-127 AND GLU-128</scope>
    <source>
        <strain>YBL2</strain>
    </source>
</reference>
<protein>
    <recommendedName>
        <fullName evidence="2">Prs ADP-ribosylating toxin</fullName>
        <ecNumber evidence="1">2.4.2.-</ecNumber>
    </recommendedName>
    <alternativeName>
        <fullName evidence="2">Mono-ADP-ribosyltransferase</fullName>
        <shortName evidence="2">mART</shortName>
    </alternativeName>
</protein>
<name>PART_SPHYB</name>
<organism>
    <name type="scientific">Sphingobium sp. (strain YBL2)</name>
    <dbReference type="NCBI Taxonomy" id="484429"/>
    <lineage>
        <taxon>Bacteria</taxon>
        <taxon>Pseudomonadati</taxon>
        <taxon>Pseudomonadota</taxon>
        <taxon>Alphaproteobacteria</taxon>
        <taxon>Sphingomonadales</taxon>
        <taxon>Sphingomonadaceae</taxon>
        <taxon>Sphingobium</taxon>
    </lineage>
</organism>